<name>RIBA_SHEWM</name>
<evidence type="ECO:0000255" key="1">
    <source>
        <dbReference type="HAMAP-Rule" id="MF_00179"/>
    </source>
</evidence>
<organism>
    <name type="scientific">Shewanella woodyi (strain ATCC 51908 / MS32)</name>
    <dbReference type="NCBI Taxonomy" id="392500"/>
    <lineage>
        <taxon>Bacteria</taxon>
        <taxon>Pseudomonadati</taxon>
        <taxon>Pseudomonadota</taxon>
        <taxon>Gammaproteobacteria</taxon>
        <taxon>Alteromonadales</taxon>
        <taxon>Shewanellaceae</taxon>
        <taxon>Shewanella</taxon>
    </lineage>
</organism>
<feature type="chain" id="PRO_1000098272" description="GTP cyclohydrolase-2">
    <location>
        <begin position="1"/>
        <end position="205"/>
    </location>
</feature>
<feature type="active site" description="Proton acceptor" evidence="1">
    <location>
        <position position="126"/>
    </location>
</feature>
<feature type="active site" description="Nucleophile" evidence="1">
    <location>
        <position position="128"/>
    </location>
</feature>
<feature type="binding site" evidence="1">
    <location>
        <begin position="49"/>
        <end position="53"/>
    </location>
    <ligand>
        <name>GTP</name>
        <dbReference type="ChEBI" id="CHEBI:37565"/>
    </ligand>
</feature>
<feature type="binding site" evidence="1">
    <location>
        <position position="54"/>
    </location>
    <ligand>
        <name>Zn(2+)</name>
        <dbReference type="ChEBI" id="CHEBI:29105"/>
        <note>catalytic</note>
    </ligand>
</feature>
<feature type="binding site" evidence="1">
    <location>
        <position position="65"/>
    </location>
    <ligand>
        <name>Zn(2+)</name>
        <dbReference type="ChEBI" id="CHEBI:29105"/>
        <note>catalytic</note>
    </ligand>
</feature>
<feature type="binding site" evidence="1">
    <location>
        <position position="67"/>
    </location>
    <ligand>
        <name>Zn(2+)</name>
        <dbReference type="ChEBI" id="CHEBI:29105"/>
        <note>catalytic</note>
    </ligand>
</feature>
<feature type="binding site" evidence="1">
    <location>
        <position position="70"/>
    </location>
    <ligand>
        <name>GTP</name>
        <dbReference type="ChEBI" id="CHEBI:37565"/>
    </ligand>
</feature>
<feature type="binding site" evidence="1">
    <location>
        <begin position="92"/>
        <end position="94"/>
    </location>
    <ligand>
        <name>GTP</name>
        <dbReference type="ChEBI" id="CHEBI:37565"/>
    </ligand>
</feature>
<feature type="binding site" evidence="1">
    <location>
        <position position="114"/>
    </location>
    <ligand>
        <name>GTP</name>
        <dbReference type="ChEBI" id="CHEBI:37565"/>
    </ligand>
</feature>
<feature type="binding site" evidence="1">
    <location>
        <position position="149"/>
    </location>
    <ligand>
        <name>GTP</name>
        <dbReference type="ChEBI" id="CHEBI:37565"/>
    </ligand>
</feature>
<feature type="binding site" evidence="1">
    <location>
        <position position="154"/>
    </location>
    <ligand>
        <name>GTP</name>
        <dbReference type="ChEBI" id="CHEBI:37565"/>
    </ligand>
</feature>
<gene>
    <name evidence="1" type="primary">ribA</name>
    <name type="ordered locus">Swoo_3046</name>
</gene>
<dbReference type="EC" id="3.5.4.25" evidence="1"/>
<dbReference type="EMBL" id="CP000961">
    <property type="protein sequence ID" value="ACA87317.1"/>
    <property type="molecule type" value="Genomic_DNA"/>
</dbReference>
<dbReference type="RefSeq" id="WP_012325653.1">
    <property type="nucleotide sequence ID" value="NC_010506.1"/>
</dbReference>
<dbReference type="SMR" id="B1KLM0"/>
<dbReference type="STRING" id="392500.Swoo_3046"/>
<dbReference type="KEGG" id="swd:Swoo_3046"/>
<dbReference type="eggNOG" id="COG0807">
    <property type="taxonomic scope" value="Bacteria"/>
</dbReference>
<dbReference type="HOGENOM" id="CLU_020273_2_1_6"/>
<dbReference type="UniPathway" id="UPA00275">
    <property type="reaction ID" value="UER00400"/>
</dbReference>
<dbReference type="Proteomes" id="UP000002168">
    <property type="component" value="Chromosome"/>
</dbReference>
<dbReference type="GO" id="GO:0005829">
    <property type="term" value="C:cytosol"/>
    <property type="evidence" value="ECO:0007669"/>
    <property type="project" value="TreeGrafter"/>
</dbReference>
<dbReference type="GO" id="GO:0005525">
    <property type="term" value="F:GTP binding"/>
    <property type="evidence" value="ECO:0007669"/>
    <property type="project" value="UniProtKB-KW"/>
</dbReference>
<dbReference type="GO" id="GO:0003935">
    <property type="term" value="F:GTP cyclohydrolase II activity"/>
    <property type="evidence" value="ECO:0007669"/>
    <property type="project" value="UniProtKB-UniRule"/>
</dbReference>
<dbReference type="GO" id="GO:0008270">
    <property type="term" value="F:zinc ion binding"/>
    <property type="evidence" value="ECO:0007669"/>
    <property type="project" value="UniProtKB-UniRule"/>
</dbReference>
<dbReference type="GO" id="GO:0009231">
    <property type="term" value="P:riboflavin biosynthetic process"/>
    <property type="evidence" value="ECO:0007669"/>
    <property type="project" value="UniProtKB-UniRule"/>
</dbReference>
<dbReference type="CDD" id="cd00641">
    <property type="entry name" value="GTP_cyclohydro2"/>
    <property type="match status" value="1"/>
</dbReference>
<dbReference type="FunFam" id="3.40.50.10990:FF:000002">
    <property type="entry name" value="GTP cyclohydrolase-2"/>
    <property type="match status" value="1"/>
</dbReference>
<dbReference type="Gene3D" id="3.40.50.10990">
    <property type="entry name" value="GTP cyclohydrolase II"/>
    <property type="match status" value="1"/>
</dbReference>
<dbReference type="HAMAP" id="MF_00179">
    <property type="entry name" value="RibA"/>
    <property type="match status" value="1"/>
</dbReference>
<dbReference type="InterPro" id="IPR032677">
    <property type="entry name" value="GTP_cyclohydro_II"/>
</dbReference>
<dbReference type="InterPro" id="IPR000926">
    <property type="entry name" value="RibA"/>
</dbReference>
<dbReference type="InterPro" id="IPR036144">
    <property type="entry name" value="RibA-like_sf"/>
</dbReference>
<dbReference type="NCBIfam" id="NF001591">
    <property type="entry name" value="PRK00393.1"/>
    <property type="match status" value="1"/>
</dbReference>
<dbReference type="NCBIfam" id="TIGR00505">
    <property type="entry name" value="ribA"/>
    <property type="match status" value="1"/>
</dbReference>
<dbReference type="PANTHER" id="PTHR21327:SF18">
    <property type="entry name" value="3,4-DIHYDROXY-2-BUTANONE 4-PHOSPHATE SYNTHASE"/>
    <property type="match status" value="1"/>
</dbReference>
<dbReference type="PANTHER" id="PTHR21327">
    <property type="entry name" value="GTP CYCLOHYDROLASE II-RELATED"/>
    <property type="match status" value="1"/>
</dbReference>
<dbReference type="Pfam" id="PF00925">
    <property type="entry name" value="GTP_cyclohydro2"/>
    <property type="match status" value="1"/>
</dbReference>
<dbReference type="SUPFAM" id="SSF142695">
    <property type="entry name" value="RibA-like"/>
    <property type="match status" value="1"/>
</dbReference>
<protein>
    <recommendedName>
        <fullName evidence="1">GTP cyclohydrolase-2</fullName>
        <ecNumber evidence="1">3.5.4.25</ecNumber>
    </recommendedName>
    <alternativeName>
        <fullName evidence="1">GTP cyclohydrolase II</fullName>
    </alternativeName>
</protein>
<proteinExistence type="inferred from homology"/>
<accession>B1KLM0</accession>
<keyword id="KW-0342">GTP-binding</keyword>
<keyword id="KW-0378">Hydrolase</keyword>
<keyword id="KW-0479">Metal-binding</keyword>
<keyword id="KW-0547">Nucleotide-binding</keyword>
<keyword id="KW-1185">Reference proteome</keyword>
<keyword id="KW-0686">Riboflavin biosynthesis</keyword>
<keyword id="KW-0862">Zinc</keyword>
<comment type="function">
    <text evidence="1">Catalyzes the conversion of GTP to 2,5-diamino-6-ribosylamino-4(3H)-pyrimidinone 5'-phosphate (DARP), formate and pyrophosphate.</text>
</comment>
<comment type="catalytic activity">
    <reaction evidence="1">
        <text>GTP + 4 H2O = 2,5-diamino-6-hydroxy-4-(5-phosphoribosylamino)-pyrimidine + formate + 2 phosphate + 3 H(+)</text>
        <dbReference type="Rhea" id="RHEA:23704"/>
        <dbReference type="ChEBI" id="CHEBI:15377"/>
        <dbReference type="ChEBI" id="CHEBI:15378"/>
        <dbReference type="ChEBI" id="CHEBI:15740"/>
        <dbReference type="ChEBI" id="CHEBI:37565"/>
        <dbReference type="ChEBI" id="CHEBI:43474"/>
        <dbReference type="ChEBI" id="CHEBI:58614"/>
        <dbReference type="EC" id="3.5.4.25"/>
    </reaction>
</comment>
<comment type="cofactor">
    <cofactor evidence="1">
        <name>Zn(2+)</name>
        <dbReference type="ChEBI" id="CHEBI:29105"/>
    </cofactor>
    <text evidence="1">Binds 1 zinc ion per subunit.</text>
</comment>
<comment type="pathway">
    <text evidence="1">Cofactor biosynthesis; riboflavin biosynthesis; 5-amino-6-(D-ribitylamino)uracil from GTP: step 1/4.</text>
</comment>
<comment type="similarity">
    <text evidence="1">Belongs to the GTP cyclohydrolase II family.</text>
</comment>
<sequence length="205" mass="22880">MSIKYVASSTLPTPWGVFDMHGFEDTETGKEHVALTFGVLDAETPTLGRIHSECLTGDALFSLRCDCGFQLQTAMQNIAEAGQGFILYLRQEGRGIGLLNKIRAYELQDQGANTVEANEKLGFAADMRKYDMILPMMEKIGIKQVSLMTNNPRKVKAMQELGIEVVQRIPLQVGKNRYNEAYLKTKSTELGHMMSEHHFSTDGES</sequence>
<reference key="1">
    <citation type="submission" date="2008-02" db="EMBL/GenBank/DDBJ databases">
        <title>Complete sequence of Shewanella woodyi ATCC 51908.</title>
        <authorList>
            <consortium name="US DOE Joint Genome Institute"/>
            <person name="Copeland A."/>
            <person name="Lucas S."/>
            <person name="Lapidus A."/>
            <person name="Glavina del Rio T."/>
            <person name="Dalin E."/>
            <person name="Tice H."/>
            <person name="Bruce D."/>
            <person name="Goodwin L."/>
            <person name="Pitluck S."/>
            <person name="Sims D."/>
            <person name="Brettin T."/>
            <person name="Detter J.C."/>
            <person name="Han C."/>
            <person name="Kuske C.R."/>
            <person name="Schmutz J."/>
            <person name="Larimer F."/>
            <person name="Land M."/>
            <person name="Hauser L."/>
            <person name="Kyrpides N."/>
            <person name="Lykidis A."/>
            <person name="Zhao J.-S."/>
            <person name="Richardson P."/>
        </authorList>
    </citation>
    <scope>NUCLEOTIDE SEQUENCE [LARGE SCALE GENOMIC DNA]</scope>
    <source>
        <strain>ATCC 51908 / MS32</strain>
    </source>
</reference>